<organism>
    <name type="scientific">Candida glabrata (strain ATCC 2001 / BCRC 20586 / JCM 3761 / NBRC 0622 / NRRL Y-65 / CBS 138)</name>
    <name type="common">Yeast</name>
    <name type="synonym">Nakaseomyces glabratus</name>
    <dbReference type="NCBI Taxonomy" id="284593"/>
    <lineage>
        <taxon>Eukaryota</taxon>
        <taxon>Fungi</taxon>
        <taxon>Dikarya</taxon>
        <taxon>Ascomycota</taxon>
        <taxon>Saccharomycotina</taxon>
        <taxon>Saccharomycetes</taxon>
        <taxon>Saccharomycetales</taxon>
        <taxon>Saccharomycetaceae</taxon>
        <taxon>Nakaseomyces</taxon>
    </lineage>
</organism>
<keyword id="KW-0472">Membrane</keyword>
<keyword id="KW-1185">Reference proteome</keyword>
<keyword id="KW-0812">Transmembrane</keyword>
<keyword id="KW-1133">Transmembrane helix</keyword>
<keyword id="KW-0926">Vacuole</keyword>
<name>YNF8_CANGA</name>
<gene>
    <name type="ordered locus">CAGL0J10076g</name>
</gene>
<dbReference type="EMBL" id="CR380956">
    <property type="protein sequence ID" value="CAG61099.1"/>
    <property type="molecule type" value="Genomic_DNA"/>
</dbReference>
<dbReference type="RefSeq" id="XP_448148.1">
    <property type="nucleotide sequence ID" value="XM_448148.1"/>
</dbReference>
<dbReference type="FunCoup" id="Q6FNP6">
    <property type="interactions" value="71"/>
</dbReference>
<dbReference type="EnsemblFungi" id="CAGL0J10076g-T">
    <property type="protein sequence ID" value="CAGL0J10076g-T-p1"/>
    <property type="gene ID" value="CAGL0J10076g"/>
</dbReference>
<dbReference type="KEGG" id="cgr:2889408"/>
<dbReference type="CGD" id="CAL0133738">
    <property type="gene designation" value="CAGL0J10076g"/>
</dbReference>
<dbReference type="VEuPathDB" id="FungiDB:CAGL0J10076g"/>
<dbReference type="eggNOG" id="ENOG502S625">
    <property type="taxonomic scope" value="Eukaryota"/>
</dbReference>
<dbReference type="HOGENOM" id="CLU_061224_0_0_1"/>
<dbReference type="InParanoid" id="Q6FNP6"/>
<dbReference type="OMA" id="MEGYHKR"/>
<dbReference type="Proteomes" id="UP000002428">
    <property type="component" value="Chromosome J"/>
</dbReference>
<dbReference type="GO" id="GO:0005935">
    <property type="term" value="C:cellular bud neck"/>
    <property type="evidence" value="ECO:0007669"/>
    <property type="project" value="TreeGrafter"/>
</dbReference>
<dbReference type="GO" id="GO:0000324">
    <property type="term" value="C:fungal-type vacuole"/>
    <property type="evidence" value="ECO:0007669"/>
    <property type="project" value="TreeGrafter"/>
</dbReference>
<dbReference type="GO" id="GO:0005774">
    <property type="term" value="C:vacuolar membrane"/>
    <property type="evidence" value="ECO:0007669"/>
    <property type="project" value="UniProtKB-SubCell"/>
</dbReference>
<dbReference type="InterPro" id="IPR051009">
    <property type="entry name" value="PRM"/>
</dbReference>
<dbReference type="PANTHER" id="PTHR36089">
    <property type="entry name" value="CHITIN SYNTHASE 3 COMPLEX PROTEIN CSI2-RELATED"/>
    <property type="match status" value="1"/>
</dbReference>
<dbReference type="PANTHER" id="PTHR36089:SF1">
    <property type="entry name" value="CHITIN SYNTHASE 3 COMPLEX PROTEIN CSI2-RELATED"/>
    <property type="match status" value="1"/>
</dbReference>
<comment type="subcellular location">
    <subcellularLocation>
        <location evidence="1">Vacuole membrane</location>
        <topology evidence="1">Single-pass membrane protein</topology>
    </subcellularLocation>
</comment>
<comment type="similarity">
    <text evidence="4">Belongs to the PRM5 family.</text>
</comment>
<feature type="chain" id="PRO_0000409316" description="Vacuolar membrane protein CAGL0J10076g">
    <location>
        <begin position="1"/>
        <end position="378"/>
    </location>
</feature>
<feature type="transmembrane region" description="Helical" evidence="2">
    <location>
        <begin position="118"/>
        <end position="138"/>
    </location>
</feature>
<feature type="region of interest" description="Disordered" evidence="3">
    <location>
        <begin position="18"/>
        <end position="70"/>
    </location>
</feature>
<feature type="region of interest" description="Disordered" evidence="3">
    <location>
        <begin position="299"/>
        <end position="368"/>
    </location>
</feature>
<feature type="compositionally biased region" description="Low complexity" evidence="3">
    <location>
        <begin position="25"/>
        <end position="41"/>
    </location>
</feature>
<feature type="compositionally biased region" description="Low complexity" evidence="3">
    <location>
        <begin position="48"/>
        <end position="70"/>
    </location>
</feature>
<feature type="compositionally biased region" description="Basic residues" evidence="3">
    <location>
        <begin position="321"/>
        <end position="337"/>
    </location>
</feature>
<feature type="compositionally biased region" description="Low complexity" evidence="3">
    <location>
        <begin position="343"/>
        <end position="356"/>
    </location>
</feature>
<proteinExistence type="inferred from homology"/>
<evidence type="ECO:0000250" key="1"/>
<evidence type="ECO:0000255" key="2"/>
<evidence type="ECO:0000256" key="3">
    <source>
        <dbReference type="SAM" id="MobiDB-lite"/>
    </source>
</evidence>
<evidence type="ECO:0000305" key="4"/>
<reference key="1">
    <citation type="journal article" date="2004" name="Nature">
        <title>Genome evolution in yeasts.</title>
        <authorList>
            <person name="Dujon B."/>
            <person name="Sherman D."/>
            <person name="Fischer G."/>
            <person name="Durrens P."/>
            <person name="Casaregola S."/>
            <person name="Lafontaine I."/>
            <person name="de Montigny J."/>
            <person name="Marck C."/>
            <person name="Neuveglise C."/>
            <person name="Talla E."/>
            <person name="Goffard N."/>
            <person name="Frangeul L."/>
            <person name="Aigle M."/>
            <person name="Anthouard V."/>
            <person name="Babour A."/>
            <person name="Barbe V."/>
            <person name="Barnay S."/>
            <person name="Blanchin S."/>
            <person name="Beckerich J.-M."/>
            <person name="Beyne E."/>
            <person name="Bleykasten C."/>
            <person name="Boisrame A."/>
            <person name="Boyer J."/>
            <person name="Cattolico L."/>
            <person name="Confanioleri F."/>
            <person name="de Daruvar A."/>
            <person name="Despons L."/>
            <person name="Fabre E."/>
            <person name="Fairhead C."/>
            <person name="Ferry-Dumazet H."/>
            <person name="Groppi A."/>
            <person name="Hantraye F."/>
            <person name="Hennequin C."/>
            <person name="Jauniaux N."/>
            <person name="Joyet P."/>
            <person name="Kachouri R."/>
            <person name="Kerrest A."/>
            <person name="Koszul R."/>
            <person name="Lemaire M."/>
            <person name="Lesur I."/>
            <person name="Ma L."/>
            <person name="Muller H."/>
            <person name="Nicaud J.-M."/>
            <person name="Nikolski M."/>
            <person name="Oztas S."/>
            <person name="Ozier-Kalogeropoulos O."/>
            <person name="Pellenz S."/>
            <person name="Potier S."/>
            <person name="Richard G.-F."/>
            <person name="Straub M.-L."/>
            <person name="Suleau A."/>
            <person name="Swennen D."/>
            <person name="Tekaia F."/>
            <person name="Wesolowski-Louvel M."/>
            <person name="Westhof E."/>
            <person name="Wirth B."/>
            <person name="Zeniou-Meyer M."/>
            <person name="Zivanovic Y."/>
            <person name="Bolotin-Fukuhara M."/>
            <person name="Thierry A."/>
            <person name="Bouchier C."/>
            <person name="Caudron B."/>
            <person name="Scarpelli C."/>
            <person name="Gaillardin C."/>
            <person name="Weissenbach J."/>
            <person name="Wincker P."/>
            <person name="Souciet J.-L."/>
        </authorList>
    </citation>
    <scope>NUCLEOTIDE SEQUENCE [LARGE SCALE GENOMIC DNA]</scope>
    <source>
        <strain>ATCC 2001 / BCRC 20586 / JCM 3761 / NBRC 0622 / NRRL Y-65 / CBS 138</strain>
    </source>
</reference>
<sequence>MLRRKRAFTDESLMLMERGLPRLVTTSTTPTPTTEPTTEPTTTKDETSQTSATDASTATTSTAATSTAATSSTSTDITATSLTITSSSLSTDVANIVPPSAENNPYIFRTSALSGTVFIAVGSIAGAILMLIFLWWSITKYLNYKRTKKDYLESMATQYPYGSRGGHAHHSSIFSTASSDVYSYGGDDEKLSLGHSRSQSVDKKTHEKVKKSKIGLFGGSTNDIFKTPTRNDSWESLSDAITNYGDGSVHRFNPIQDDIQYNNRRSLFISPTVEVMNLPRQEVPDIFATPKKQQTSIYNDYDTPLIPDLSKPEDVALSPQRSHRKTPSNDKYHRRNRSSANLSPSRSPTRTPIRTRNMARDHRKTPSMYLEDLLDDNY</sequence>
<accession>Q6FNP6</accession>
<protein>
    <recommendedName>
        <fullName>Vacuolar membrane protein CAGL0J10076g</fullName>
    </recommendedName>
</protein>